<gene>
    <name evidence="1" type="primary">kdpC</name>
    <name type="ordered locus">YE2962</name>
</gene>
<comment type="function">
    <text evidence="1">Part of the high-affinity ATP-driven potassium transport (or Kdp) system, which catalyzes the hydrolysis of ATP coupled with the electrogenic transport of potassium into the cytoplasm. This subunit acts as a catalytic chaperone that increases the ATP-binding affinity of the ATP-hydrolyzing subunit KdpB by the formation of a transient KdpB/KdpC/ATP ternary complex.</text>
</comment>
<comment type="subunit">
    <text evidence="1">The system is composed of three essential subunits: KdpA, KdpB and KdpC.</text>
</comment>
<comment type="subcellular location">
    <subcellularLocation>
        <location evidence="1">Cell inner membrane</location>
        <topology evidence="1">Single-pass membrane protein</topology>
    </subcellularLocation>
</comment>
<comment type="similarity">
    <text evidence="1">Belongs to the KdpC family.</text>
</comment>
<name>KDPC_YERE8</name>
<organism>
    <name type="scientific">Yersinia enterocolitica serotype O:8 / biotype 1B (strain NCTC 13174 / 8081)</name>
    <dbReference type="NCBI Taxonomy" id="393305"/>
    <lineage>
        <taxon>Bacteria</taxon>
        <taxon>Pseudomonadati</taxon>
        <taxon>Pseudomonadota</taxon>
        <taxon>Gammaproteobacteria</taxon>
        <taxon>Enterobacterales</taxon>
        <taxon>Yersiniaceae</taxon>
        <taxon>Yersinia</taxon>
    </lineage>
</organism>
<protein>
    <recommendedName>
        <fullName evidence="1">Potassium-transporting ATPase KdpC subunit</fullName>
    </recommendedName>
    <alternativeName>
        <fullName evidence="1">ATP phosphohydrolase [potassium-transporting] C chain</fullName>
    </alternativeName>
    <alternativeName>
        <fullName evidence="1">Potassium-binding and translocating subunit C</fullName>
    </alternativeName>
    <alternativeName>
        <fullName evidence="1">Potassium-translocating ATPase C chain</fullName>
    </alternativeName>
</protein>
<feature type="chain" id="PRO_1000022325" description="Potassium-transporting ATPase KdpC subunit">
    <location>
        <begin position="1"/>
        <end position="200"/>
    </location>
</feature>
<feature type="transmembrane region" description="Helical" evidence="1">
    <location>
        <begin position="6"/>
        <end position="26"/>
    </location>
</feature>
<dbReference type="EMBL" id="AM286415">
    <property type="protein sequence ID" value="CAL13001.1"/>
    <property type="molecule type" value="Genomic_DNA"/>
</dbReference>
<dbReference type="RefSeq" id="YP_001007151.1">
    <property type="nucleotide sequence ID" value="NC_008800.1"/>
</dbReference>
<dbReference type="SMR" id="A1JQS4"/>
<dbReference type="KEGG" id="yen:YE2962"/>
<dbReference type="PATRIC" id="fig|393305.7.peg.3153"/>
<dbReference type="eggNOG" id="COG2156">
    <property type="taxonomic scope" value="Bacteria"/>
</dbReference>
<dbReference type="HOGENOM" id="CLU_077094_2_0_6"/>
<dbReference type="OrthoDB" id="9788285at2"/>
<dbReference type="Proteomes" id="UP000000642">
    <property type="component" value="Chromosome"/>
</dbReference>
<dbReference type="GO" id="GO:0005886">
    <property type="term" value="C:plasma membrane"/>
    <property type="evidence" value="ECO:0007669"/>
    <property type="project" value="UniProtKB-SubCell"/>
</dbReference>
<dbReference type="GO" id="GO:0005524">
    <property type="term" value="F:ATP binding"/>
    <property type="evidence" value="ECO:0007669"/>
    <property type="project" value="UniProtKB-UniRule"/>
</dbReference>
<dbReference type="GO" id="GO:0008556">
    <property type="term" value="F:P-type potassium transmembrane transporter activity"/>
    <property type="evidence" value="ECO:0007669"/>
    <property type="project" value="InterPro"/>
</dbReference>
<dbReference type="HAMAP" id="MF_00276">
    <property type="entry name" value="KdpC"/>
    <property type="match status" value="1"/>
</dbReference>
<dbReference type="InterPro" id="IPR003820">
    <property type="entry name" value="KdpC"/>
</dbReference>
<dbReference type="NCBIfam" id="TIGR00681">
    <property type="entry name" value="kdpC"/>
    <property type="match status" value="1"/>
</dbReference>
<dbReference type="NCBIfam" id="NF001454">
    <property type="entry name" value="PRK00315.1"/>
    <property type="match status" value="1"/>
</dbReference>
<dbReference type="PANTHER" id="PTHR30042">
    <property type="entry name" value="POTASSIUM-TRANSPORTING ATPASE C CHAIN"/>
    <property type="match status" value="1"/>
</dbReference>
<dbReference type="PANTHER" id="PTHR30042:SF2">
    <property type="entry name" value="POTASSIUM-TRANSPORTING ATPASE KDPC SUBUNIT"/>
    <property type="match status" value="1"/>
</dbReference>
<dbReference type="Pfam" id="PF02669">
    <property type="entry name" value="KdpC"/>
    <property type="match status" value="1"/>
</dbReference>
<dbReference type="PIRSF" id="PIRSF001296">
    <property type="entry name" value="K_ATPase_KdpC"/>
    <property type="match status" value="1"/>
</dbReference>
<proteinExistence type="inferred from homology"/>
<sequence>MSYLRPAVVLLILLTLITGIAYPLLTTGLAKLMFSQQANGSLVMLGDEVVGSSLIGQNFTQLGYFSGRPSATAEMPYNSMASGGSNLAISNPELDKAITERVKSLRQANPTQTGPVPVDLVTASASGLDPQISLAAAYYQAPRIASIRQMPLSEVKQLIDSNVQKATPNFFGESVVNVLNLNMALDAQSHVKVPATSTKS</sequence>
<evidence type="ECO:0000255" key="1">
    <source>
        <dbReference type="HAMAP-Rule" id="MF_00276"/>
    </source>
</evidence>
<keyword id="KW-0067">ATP-binding</keyword>
<keyword id="KW-0997">Cell inner membrane</keyword>
<keyword id="KW-1003">Cell membrane</keyword>
<keyword id="KW-0406">Ion transport</keyword>
<keyword id="KW-0472">Membrane</keyword>
<keyword id="KW-0547">Nucleotide-binding</keyword>
<keyword id="KW-0630">Potassium</keyword>
<keyword id="KW-0633">Potassium transport</keyword>
<keyword id="KW-0812">Transmembrane</keyword>
<keyword id="KW-1133">Transmembrane helix</keyword>
<keyword id="KW-0813">Transport</keyword>
<accession>A1JQS4</accession>
<reference key="1">
    <citation type="journal article" date="2006" name="PLoS Genet.">
        <title>The complete genome sequence and comparative genome analysis of the high pathogenicity Yersinia enterocolitica strain 8081.</title>
        <authorList>
            <person name="Thomson N.R."/>
            <person name="Howard S."/>
            <person name="Wren B.W."/>
            <person name="Holden M.T.G."/>
            <person name="Crossman L."/>
            <person name="Challis G.L."/>
            <person name="Churcher C."/>
            <person name="Mungall K."/>
            <person name="Brooks K."/>
            <person name="Chillingworth T."/>
            <person name="Feltwell T."/>
            <person name="Abdellah Z."/>
            <person name="Hauser H."/>
            <person name="Jagels K."/>
            <person name="Maddison M."/>
            <person name="Moule S."/>
            <person name="Sanders M."/>
            <person name="Whitehead S."/>
            <person name="Quail M.A."/>
            <person name="Dougan G."/>
            <person name="Parkhill J."/>
            <person name="Prentice M.B."/>
        </authorList>
    </citation>
    <scope>NUCLEOTIDE SEQUENCE [LARGE SCALE GENOMIC DNA]</scope>
    <source>
        <strain>NCTC 13174 / 8081</strain>
    </source>
</reference>